<keyword id="KW-0025">Alternative splicing</keyword>
<keyword id="KW-0068">Autocatalytic cleavage</keyword>
<keyword id="KW-0106">Calcium</keyword>
<keyword id="KW-0180">Complement pathway</keyword>
<keyword id="KW-1015">Disulfide bond</keyword>
<keyword id="KW-0245">EGF-like domain</keyword>
<keyword id="KW-0325">Glycoprotein</keyword>
<keyword id="KW-0378">Hydrolase</keyword>
<keyword id="KW-0379">Hydroxylation</keyword>
<keyword id="KW-0391">Immunity</keyword>
<keyword id="KW-0399">Innate immunity</keyword>
<keyword id="KW-0479">Metal-binding</keyword>
<keyword id="KW-0645">Protease</keyword>
<keyword id="KW-1185">Reference proteome</keyword>
<keyword id="KW-0677">Repeat</keyword>
<keyword id="KW-0964">Secreted</keyword>
<keyword id="KW-0720">Serine protease</keyword>
<keyword id="KW-0732">Signal</keyword>
<keyword id="KW-0768">Sushi</keyword>
<protein>
    <recommendedName>
        <fullName>Mannan-binding lectin serine protease 2</fullName>
        <ecNumber>3.4.21.104</ecNumber>
    </recommendedName>
    <alternativeName>
        <fullName>MBL-associated serine protease 2</fullName>
    </alternativeName>
    <alternativeName>
        <fullName>Mannose-binding protein-associated serine protease 2</fullName>
        <shortName>MASP-2</shortName>
    </alternativeName>
    <component>
        <recommendedName>
            <fullName>Mannan-binding lectin serine protease 2 A chain</fullName>
        </recommendedName>
    </component>
    <component>
        <recommendedName>
            <fullName>Mannan-binding lectin serine protease 2 B chain</fullName>
        </recommendedName>
    </component>
</protein>
<comment type="function">
    <text evidence="1">Serum protease that plays an important role in the activation of the complement system via mannose-binding lectin. After activation by auto-catalytic cleavage it cleaves C2 and C4, leading to their activation and to the formation of C3 convertase (By similarity).</text>
</comment>
<comment type="catalytic activity">
    <reaction>
        <text>Selective cleavage after Arg-223 in complement component C2 (-Ser-Leu-Gly-Arg-|-Lys-Ile-Gln-Ile) and after Arg-76 in complement component C4 (-Gly-Leu-Gln-Arg-|-Ala-Leu-Glu-Ile).</text>
        <dbReference type="EC" id="3.4.21.104"/>
    </reaction>
</comment>
<comment type="subunit">
    <text evidence="1">Homodimer; disulfide-linked. Binds MBL2. Isoform 2 binds to MASP1. Binds SERPING1 (By similarity).</text>
</comment>
<comment type="subcellular location">
    <subcellularLocation>
        <location>Secreted</location>
    </subcellularLocation>
</comment>
<comment type="alternative products">
    <event type="alternative splicing"/>
    <isoform>
        <id>Q91WP0-1</id>
        <name>1</name>
        <sequence type="displayed"/>
    </isoform>
    <isoform>
        <id>Q91WP0-2</id>
        <name>2</name>
        <name>MAp19</name>
        <sequence type="described" ref="VSP_014636 VSP_014637"/>
    </isoform>
</comment>
<comment type="tissue specificity">
    <text>Plasma.</text>
</comment>
<comment type="PTM">
    <text evidence="1">The iron and 2-oxoglutarate dependent 3-hydroxylation of aspartate and asparagine is (R) stereospecific within EGF domains.</text>
</comment>
<comment type="miscellaneous">
    <text evidence="1">Dimerization and MBL2 binding requires calcium ions.</text>
</comment>
<comment type="similarity">
    <text evidence="4">Belongs to the peptidase S1 family.</text>
</comment>
<proteinExistence type="evidence at protein level"/>
<feature type="signal peptide" evidence="1">
    <location>
        <begin position="1"/>
        <end position="19"/>
    </location>
</feature>
<feature type="chain" id="PRO_0000027601" description="Mannan-binding lectin serine protease 2">
    <location>
        <begin position="20"/>
        <end position="685"/>
    </location>
</feature>
<feature type="chain" id="PRO_0000027602" description="Mannan-binding lectin serine protease 2 A chain">
    <location>
        <begin position="20"/>
        <end position="443"/>
    </location>
</feature>
<feature type="chain" id="PRO_0000027603" description="Mannan-binding lectin serine protease 2 B chain">
    <location>
        <begin position="444"/>
        <end position="685"/>
    </location>
</feature>
<feature type="domain" description="CUB 1" evidence="3">
    <location>
        <begin position="20"/>
        <end position="137"/>
    </location>
</feature>
<feature type="domain" description="EGF-like; calcium-binding">
    <location>
        <begin position="138"/>
        <end position="181"/>
    </location>
</feature>
<feature type="domain" description="CUB 2" evidence="3">
    <location>
        <begin position="184"/>
        <end position="296"/>
    </location>
</feature>
<feature type="domain" description="Sushi 1" evidence="5">
    <location>
        <begin position="298"/>
        <end position="363"/>
    </location>
</feature>
<feature type="domain" description="Sushi 2" evidence="5">
    <location>
        <begin position="364"/>
        <end position="431"/>
    </location>
</feature>
<feature type="domain" description="Peptidase S1" evidence="4">
    <location>
        <begin position="444"/>
        <end position="683"/>
    </location>
</feature>
<feature type="active site" description="Charge relay system" evidence="1">
    <location>
        <position position="483"/>
    </location>
</feature>
<feature type="active site" description="Charge relay system" evidence="1">
    <location>
        <position position="532"/>
    </location>
</feature>
<feature type="active site" description="Charge relay system" evidence="1">
    <location>
        <position position="632"/>
    </location>
</feature>
<feature type="binding site" evidence="1">
    <location>
        <position position="67"/>
    </location>
    <ligand>
        <name>Ca(2+)</name>
        <dbReference type="ChEBI" id="CHEBI:29108"/>
        <label>1</label>
    </ligand>
</feature>
<feature type="binding site" evidence="1">
    <location>
        <position position="75"/>
    </location>
    <ligand>
        <name>Ca(2+)</name>
        <dbReference type="ChEBI" id="CHEBI:29108"/>
        <label>1</label>
    </ligand>
</feature>
<feature type="binding site" evidence="1">
    <location>
        <position position="120"/>
    </location>
    <ligand>
        <name>Ca(2+)</name>
        <dbReference type="ChEBI" id="CHEBI:29108"/>
        <label>1</label>
    </ligand>
</feature>
<feature type="binding site" evidence="1">
    <location>
        <position position="122"/>
    </location>
    <ligand>
        <name>Ca(2+)</name>
        <dbReference type="ChEBI" id="CHEBI:29108"/>
        <label>1</label>
    </ligand>
</feature>
<feature type="binding site" evidence="1">
    <location>
        <position position="123"/>
    </location>
    <ligand>
        <name>Ca(2+)</name>
        <dbReference type="ChEBI" id="CHEBI:29108"/>
        <label>1</label>
    </ligand>
</feature>
<feature type="binding site" evidence="1">
    <location>
        <position position="138"/>
    </location>
    <ligand>
        <name>Ca(2+)</name>
        <dbReference type="ChEBI" id="CHEBI:29108"/>
        <label>2</label>
    </ligand>
</feature>
<feature type="binding site" evidence="1">
    <location>
        <position position="141"/>
    </location>
    <ligand>
        <name>Ca(2+)</name>
        <dbReference type="ChEBI" id="CHEBI:29108"/>
        <label>2</label>
    </ligand>
</feature>
<feature type="binding site" evidence="1">
    <location>
        <position position="158"/>
    </location>
    <ligand>
        <name>Ca(2+)</name>
        <dbReference type="ChEBI" id="CHEBI:29108"/>
        <label>2</label>
    </ligand>
</feature>
<feature type="binding site" evidence="1">
    <location>
        <position position="162"/>
    </location>
    <ligand>
        <name>Ca(2+)</name>
        <dbReference type="ChEBI" id="CHEBI:29108"/>
        <label>2</label>
    </ligand>
</feature>
<feature type="site" description="Cleavage" evidence="1">
    <location>
        <begin position="443"/>
        <end position="444"/>
    </location>
</feature>
<feature type="modified residue" description="(3R)-3-hydroxyasparagine" evidence="2">
    <location>
        <position position="158"/>
    </location>
</feature>
<feature type="glycosylation site" description="N-linked (GlcNAc...) asparagine" evidence="2">
    <location>
        <position position="103"/>
    </location>
</feature>
<feature type="glycosylation site" description="N-linked (GlcNAc...) asparagine" evidence="2">
    <location>
        <position position="285"/>
    </location>
</feature>
<feature type="glycosylation site" description="N-linked (GlcNAc...) asparagine" evidence="2">
    <location>
        <position position="308"/>
    </location>
</feature>
<feature type="glycosylation site" description="N-linked (GlcNAc...) asparagine" evidence="2">
    <location>
        <position position="545"/>
    </location>
</feature>
<feature type="glycosylation site" description="N-linked (GlcNAc...) asparagine" evidence="6">
    <location>
        <position position="641"/>
    </location>
</feature>
<feature type="disulfide bond" evidence="1">
    <location>
        <begin position="72"/>
        <end position="90"/>
    </location>
</feature>
<feature type="disulfide bond" evidence="1">
    <location>
        <begin position="142"/>
        <end position="156"/>
    </location>
</feature>
<feature type="disulfide bond" evidence="1">
    <location>
        <begin position="152"/>
        <end position="165"/>
    </location>
</feature>
<feature type="disulfide bond" evidence="1">
    <location>
        <begin position="167"/>
        <end position="180"/>
    </location>
</feature>
<feature type="disulfide bond" evidence="1">
    <location>
        <begin position="184"/>
        <end position="211"/>
    </location>
</feature>
<feature type="disulfide bond" evidence="1">
    <location>
        <begin position="241"/>
        <end position="259"/>
    </location>
</feature>
<feature type="disulfide bond" evidence="1">
    <location>
        <begin position="300"/>
        <end position="348"/>
    </location>
</feature>
<feature type="disulfide bond" evidence="1">
    <location>
        <begin position="328"/>
        <end position="361"/>
    </location>
</feature>
<feature type="disulfide bond" evidence="1">
    <location>
        <begin position="366"/>
        <end position="411"/>
    </location>
</feature>
<feature type="disulfide bond" evidence="1">
    <location>
        <begin position="396"/>
        <end position="429"/>
    </location>
</feature>
<feature type="disulfide bond" description="Interchain (between A and B chains)" evidence="3 4 5">
    <location>
        <begin position="433"/>
        <end position="552"/>
    </location>
</feature>
<feature type="disulfide bond" evidence="1">
    <location>
        <begin position="598"/>
        <end position="617"/>
    </location>
</feature>
<feature type="disulfide bond" evidence="1">
    <location>
        <begin position="628"/>
        <end position="659"/>
    </location>
</feature>
<feature type="splice variant" id="VSP_014636" description="In isoform 2." evidence="7">
    <original>ALCS</original>
    <variation>EQSL</variation>
    <location>
        <begin position="182"/>
        <end position="185"/>
    </location>
</feature>
<feature type="splice variant" id="VSP_014637" description="In isoform 2." evidence="7">
    <location>
        <begin position="186"/>
        <end position="685"/>
    </location>
</feature>
<feature type="sequence conflict" description="In Ref. 2." evidence="8" ref="2">
    <original>MR</original>
    <variation>MSLPCPQ</variation>
    <location>
        <begin position="1"/>
        <end position="2"/>
    </location>
</feature>
<feature type="sequence conflict" description="In Ref. 1; BAA34674 and 2; CAB65247." evidence="8" ref="1 2">
    <original>V</original>
    <variation>I</variation>
    <location>
        <position position="172"/>
    </location>
</feature>
<feature type="sequence conflict" description="In Ref. 2; CAB65250." evidence="8" ref="2">
    <original>R</original>
    <variation>K</variation>
    <location>
        <position position="192"/>
    </location>
</feature>
<feature type="sequence conflict" description="In Ref. 1; BAA34674." evidence="8" ref="1">
    <original>I</original>
    <variation>T</variation>
    <location>
        <position position="317"/>
    </location>
</feature>
<feature type="sequence conflict" description="In Ref. 2; CAB65250." evidence="8" ref="2">
    <original>S</original>
    <variation>Y</variation>
    <location>
        <position position="325"/>
    </location>
</feature>
<feature type="sequence conflict" description="In Ref. 1; BAA34674." evidence="8" ref="1">
    <original>E</original>
    <variation>Q</variation>
    <location>
        <position position="384"/>
    </location>
</feature>
<feature type="sequence conflict" description="In Ref. 1; BAA34674." evidence="8" ref="1">
    <original>A</original>
    <variation>T</variation>
    <location>
        <position position="600"/>
    </location>
</feature>
<feature type="sequence conflict" description="In Ref. 1; BAA34674." evidence="8" ref="1">
    <original>D</original>
    <variation>G</variation>
    <location>
        <position position="663"/>
    </location>
</feature>
<feature type="sequence conflict" description="In Ref. 1; BAA34674." evidence="8" ref="1">
    <original>I</original>
    <variation>N</variation>
    <location>
        <position position="678"/>
    </location>
</feature>
<accession>Q91WP0</accession>
<accession>B1ARY2</accession>
<accession>B1ARY3</accession>
<accession>Q9QXA4</accession>
<accession>Q9QXD2</accession>
<accession>Q9QXD5</accession>
<accession>Q9Z338</accession>
<sequence>MRLLIFLGLLWSLVATLLGSKWPEPVFGRLVSPGFPEKYADHQDRSWTLTAPPGYRLRLYFTHFDLELSYRCEYDFVKLSSGTKVLATLCGQESTDTEQAPGNDTFYSLGPSLKVTFHSDYSNEKPFTGFEAFYAAEDVDECRVSLGDSVPCDHYCHNYLGGYYCSCRAGYVLHQNKHTCSALCSGQVFTGRSGYLSSPEYPQPYPKLSSCTYSIRLEDGFSVILDFVESFDVETHPEAQCPYDSLKIQTDKGEHGPFCGKTLPPRIETDSHKVTITFATDESGNHTGWKIHYTSTARPCPDPTAPPNGSISPVQAIYVLKDRFSVFCKTGFELLQGSVPLKSFTAVCQKDGSWDRPMPECSIIDCGPPDDLPNGHVDYITGPEVTTYKAVIQYSCEETFYTMSSNGKYVCEADGFWTSSKGEKLPPVCEPVCGLSTHTIGGRIVGGQPAKPGDFPWQVLLLGQTTAAAGALIHDNWVLTAAHAVYEKRMAASSLNIRMGILKRLSPHYTQAWPEEIFIHEGYTHGAGFDNDIALIKLKNKVTINGSIMPVCLPRKEAASLMRTDFTGTVAGWGLTQKGLLARNLMFVDIPIADHQKCTAVYEKLYPGVRVSANMLCAGLETGGKDSCRGDSGGALVFLDNETQRWFVGGIVSWGSINCGAADQYGVYTKVINYIPWIENIISNF</sequence>
<dbReference type="EC" id="3.4.21.104"/>
<dbReference type="EMBL" id="AB009459">
    <property type="protein sequence ID" value="BAA34674.1"/>
    <property type="molecule type" value="mRNA"/>
</dbReference>
<dbReference type="EMBL" id="AJ250369">
    <property type="protein sequence ID" value="CAB63701.1"/>
    <property type="molecule type" value="mRNA"/>
</dbReference>
<dbReference type="EMBL" id="Y19160">
    <property type="protein sequence ID" value="CAB65247.1"/>
    <property type="molecule type" value="mRNA"/>
</dbReference>
<dbReference type="EMBL" id="Y19163">
    <property type="protein sequence ID" value="CAB65250.1"/>
    <property type="molecule type" value="mRNA"/>
</dbReference>
<dbReference type="EMBL" id="AK050052">
    <property type="protein sequence ID" value="BAC34052.1"/>
    <property type="molecule type" value="mRNA"/>
</dbReference>
<dbReference type="EMBL" id="AL606969">
    <property type="status" value="NOT_ANNOTATED_CDS"/>
    <property type="molecule type" value="Genomic_DNA"/>
</dbReference>
<dbReference type="EMBL" id="BC013893">
    <property type="protein sequence ID" value="AAH13893.1"/>
    <property type="molecule type" value="mRNA"/>
</dbReference>
<dbReference type="CCDS" id="CCDS18941.1">
    <molecule id="Q91WP0-1"/>
</dbReference>
<dbReference type="CCDS" id="CCDS18942.1">
    <molecule id="Q91WP0-2"/>
</dbReference>
<dbReference type="RefSeq" id="NP_001003893.1">
    <molecule id="Q91WP0-1"/>
    <property type="nucleotide sequence ID" value="NM_001003893.3"/>
</dbReference>
<dbReference type="RefSeq" id="NP_034897.1">
    <molecule id="Q91WP0-2"/>
    <property type="nucleotide sequence ID" value="NM_010767.4"/>
</dbReference>
<dbReference type="SMR" id="Q91WP0"/>
<dbReference type="BioGRID" id="201317">
    <property type="interactions" value="1"/>
</dbReference>
<dbReference type="FunCoup" id="Q91WP0">
    <property type="interactions" value="60"/>
</dbReference>
<dbReference type="STRING" id="10090.ENSMUSP00000049729"/>
<dbReference type="BindingDB" id="Q91WP0"/>
<dbReference type="MEROPS" id="S01.229"/>
<dbReference type="GlyCosmos" id="Q91WP0">
    <property type="glycosylation" value="5 sites, No reported glycans"/>
</dbReference>
<dbReference type="GlyGen" id="Q91WP0">
    <property type="glycosylation" value="6 sites, 1 O-linked glycan (1 site)"/>
</dbReference>
<dbReference type="iPTMnet" id="Q91WP0"/>
<dbReference type="PhosphoSitePlus" id="Q91WP0"/>
<dbReference type="CPTAC" id="non-CPTAC-3430"/>
<dbReference type="CPTAC" id="non-CPTAC-3722"/>
<dbReference type="jPOST" id="Q91WP0"/>
<dbReference type="PaxDb" id="10090-ENSMUSP00000049729"/>
<dbReference type="PeptideAtlas" id="Q91WP0"/>
<dbReference type="ProteomicsDB" id="252736">
    <molecule id="Q91WP0-1"/>
</dbReference>
<dbReference type="ProteomicsDB" id="252737">
    <molecule id="Q91WP0-2"/>
</dbReference>
<dbReference type="Antibodypedia" id="27998">
    <property type="antibodies" value="399 antibodies from 28 providers"/>
</dbReference>
<dbReference type="DNASU" id="17175"/>
<dbReference type="Ensembl" id="ENSMUST00000052060.7">
    <molecule id="Q91WP0-1"/>
    <property type="protein sequence ID" value="ENSMUSP00000049729.7"/>
    <property type="gene ID" value="ENSMUSG00000028979.18"/>
</dbReference>
<dbReference type="Ensembl" id="ENSMUST00000105701.9">
    <molecule id="Q91WP0-2"/>
    <property type="protein sequence ID" value="ENSMUSP00000101326.3"/>
    <property type="gene ID" value="ENSMUSG00000028979.18"/>
</dbReference>
<dbReference type="GeneID" id="17175"/>
<dbReference type="KEGG" id="mmu:17175"/>
<dbReference type="UCSC" id="uc008vux.1">
    <molecule id="Q91WP0-2"/>
    <property type="organism name" value="mouse"/>
</dbReference>
<dbReference type="UCSC" id="uc008vuy.1">
    <molecule id="Q91WP0-1"/>
    <property type="organism name" value="mouse"/>
</dbReference>
<dbReference type="AGR" id="MGI:1330832"/>
<dbReference type="CTD" id="10747"/>
<dbReference type="MGI" id="MGI:1330832">
    <property type="gene designation" value="Masp2"/>
</dbReference>
<dbReference type="VEuPathDB" id="HostDB:ENSMUSG00000028979"/>
<dbReference type="eggNOG" id="KOG3627">
    <property type="taxonomic scope" value="Eukaryota"/>
</dbReference>
<dbReference type="GeneTree" id="ENSGT00950000183084"/>
<dbReference type="HOGENOM" id="CLU_103588_3_0_1"/>
<dbReference type="InParanoid" id="Q91WP0"/>
<dbReference type="OMA" id="YTCAHDG"/>
<dbReference type="OrthoDB" id="9985152at2759"/>
<dbReference type="PhylomeDB" id="Q91WP0"/>
<dbReference type="TreeFam" id="TF330373"/>
<dbReference type="BRENDA" id="3.4.21.104">
    <property type="organism ID" value="3474"/>
</dbReference>
<dbReference type="Reactome" id="R-MMU-166662">
    <property type="pathway name" value="Lectin pathway of complement activation"/>
</dbReference>
<dbReference type="Reactome" id="R-MMU-166663">
    <property type="pathway name" value="Initial triggering of complement"/>
</dbReference>
<dbReference type="Reactome" id="R-MMU-2855086">
    <property type="pathway name" value="Ficolins bind to repetitive carbohydrate structures on the target cell surface"/>
</dbReference>
<dbReference type="BioGRID-ORCS" id="17175">
    <property type="hits" value="1 hit in 78 CRISPR screens"/>
</dbReference>
<dbReference type="ChiTaRS" id="Masp2">
    <property type="organism name" value="mouse"/>
</dbReference>
<dbReference type="PRO" id="PR:Q91WP0"/>
<dbReference type="Proteomes" id="UP000000589">
    <property type="component" value="Chromosome 4"/>
</dbReference>
<dbReference type="RNAct" id="Q91WP0">
    <property type="molecule type" value="protein"/>
</dbReference>
<dbReference type="Bgee" id="ENSMUSG00000028979">
    <property type="expression patterns" value="Expressed in left lobe of liver and 68 other cell types or tissues"/>
</dbReference>
<dbReference type="GO" id="GO:0005576">
    <property type="term" value="C:extracellular region"/>
    <property type="evidence" value="ECO:0007669"/>
    <property type="project" value="UniProtKB-SubCell"/>
</dbReference>
<dbReference type="GO" id="GO:0005509">
    <property type="term" value="F:calcium ion binding"/>
    <property type="evidence" value="ECO:0007669"/>
    <property type="project" value="InterPro"/>
</dbReference>
<dbReference type="GO" id="GO:0048306">
    <property type="term" value="F:calcium-dependent protein binding"/>
    <property type="evidence" value="ECO:0007669"/>
    <property type="project" value="Ensembl"/>
</dbReference>
<dbReference type="GO" id="GO:0001855">
    <property type="term" value="F:complement component C4b binding"/>
    <property type="evidence" value="ECO:0007669"/>
    <property type="project" value="Ensembl"/>
</dbReference>
<dbReference type="GO" id="GO:0004252">
    <property type="term" value="F:serine-type endopeptidase activity"/>
    <property type="evidence" value="ECO:0007669"/>
    <property type="project" value="Ensembl"/>
</dbReference>
<dbReference type="GO" id="GO:0006958">
    <property type="term" value="P:complement activation, classical pathway"/>
    <property type="evidence" value="ECO:0007669"/>
    <property type="project" value="UniProtKB-KW"/>
</dbReference>
<dbReference type="GO" id="GO:0001867">
    <property type="term" value="P:complement activation, lectin pathway"/>
    <property type="evidence" value="ECO:0000314"/>
    <property type="project" value="MGI"/>
</dbReference>
<dbReference type="GO" id="GO:0006508">
    <property type="term" value="P:proteolysis"/>
    <property type="evidence" value="ECO:0007669"/>
    <property type="project" value="UniProtKB-KW"/>
</dbReference>
<dbReference type="CDD" id="cd00033">
    <property type="entry name" value="CCP"/>
    <property type="match status" value="2"/>
</dbReference>
<dbReference type="CDD" id="cd00041">
    <property type="entry name" value="CUB"/>
    <property type="match status" value="2"/>
</dbReference>
<dbReference type="CDD" id="cd00054">
    <property type="entry name" value="EGF_CA"/>
    <property type="match status" value="1"/>
</dbReference>
<dbReference type="CDD" id="cd00190">
    <property type="entry name" value="Tryp_SPc"/>
    <property type="match status" value="1"/>
</dbReference>
<dbReference type="FunFam" id="2.10.25.10:FF:000059">
    <property type="entry name" value="Mannan-binding lectin serine protease 1"/>
    <property type="match status" value="1"/>
</dbReference>
<dbReference type="FunFam" id="2.10.70.10:FF:000016">
    <property type="entry name" value="Mannan-binding lectin serine protease 1"/>
    <property type="match status" value="1"/>
</dbReference>
<dbReference type="FunFam" id="2.60.120.290:FF:000006">
    <property type="entry name" value="Mannan-binding lectin serine protease 1"/>
    <property type="match status" value="1"/>
</dbReference>
<dbReference type="FunFam" id="2.60.120.290:FF:000012">
    <property type="entry name" value="mannan-binding lectin serine protease 1 isoform X1"/>
    <property type="match status" value="1"/>
</dbReference>
<dbReference type="FunFam" id="2.10.70.10:FF:000084">
    <property type="entry name" value="Mannan-binding lectin serine protease 2"/>
    <property type="match status" value="1"/>
</dbReference>
<dbReference type="FunFam" id="2.40.10.10:FF:000089">
    <property type="entry name" value="Mannan-binding lectin serine protease 2"/>
    <property type="match status" value="1"/>
</dbReference>
<dbReference type="Gene3D" id="2.10.70.10">
    <property type="entry name" value="Complement Module, domain 1"/>
    <property type="match status" value="2"/>
</dbReference>
<dbReference type="Gene3D" id="2.10.25.10">
    <property type="entry name" value="Laminin"/>
    <property type="match status" value="1"/>
</dbReference>
<dbReference type="Gene3D" id="2.60.120.290">
    <property type="entry name" value="Spermadhesin, CUB domain"/>
    <property type="match status" value="2"/>
</dbReference>
<dbReference type="Gene3D" id="2.40.10.10">
    <property type="entry name" value="Trypsin-like serine proteases"/>
    <property type="match status" value="2"/>
</dbReference>
<dbReference type="InterPro" id="IPR000859">
    <property type="entry name" value="CUB_dom"/>
</dbReference>
<dbReference type="InterPro" id="IPR001881">
    <property type="entry name" value="EGF-like_Ca-bd_dom"/>
</dbReference>
<dbReference type="InterPro" id="IPR000742">
    <property type="entry name" value="EGF-like_dom"/>
</dbReference>
<dbReference type="InterPro" id="IPR018097">
    <property type="entry name" value="EGF_Ca-bd_CS"/>
</dbReference>
<dbReference type="InterPro" id="IPR049883">
    <property type="entry name" value="NOTCH1_EGF-like"/>
</dbReference>
<dbReference type="InterPro" id="IPR024175">
    <property type="entry name" value="Pept_S1A_C1r/C1S/mannan-bd"/>
</dbReference>
<dbReference type="InterPro" id="IPR009003">
    <property type="entry name" value="Peptidase_S1_PA"/>
</dbReference>
<dbReference type="InterPro" id="IPR043504">
    <property type="entry name" value="Peptidase_S1_PA_chymotrypsin"/>
</dbReference>
<dbReference type="InterPro" id="IPR001314">
    <property type="entry name" value="Peptidase_S1A"/>
</dbReference>
<dbReference type="InterPro" id="IPR035914">
    <property type="entry name" value="Sperma_CUB_dom_sf"/>
</dbReference>
<dbReference type="InterPro" id="IPR035976">
    <property type="entry name" value="Sushi/SCR/CCP_sf"/>
</dbReference>
<dbReference type="InterPro" id="IPR000436">
    <property type="entry name" value="Sushi_SCR_CCP_dom"/>
</dbReference>
<dbReference type="InterPro" id="IPR001254">
    <property type="entry name" value="Trypsin_dom"/>
</dbReference>
<dbReference type="InterPro" id="IPR033116">
    <property type="entry name" value="TRYPSIN_SER"/>
</dbReference>
<dbReference type="PANTHER" id="PTHR24255">
    <property type="entry name" value="COMPLEMENT COMPONENT 1, S SUBCOMPONENT-RELATED"/>
    <property type="match status" value="1"/>
</dbReference>
<dbReference type="PANTHER" id="PTHR24255:SF10">
    <property type="entry name" value="MANNAN-BINDING LECTIN SERINE PROTEASE 2"/>
    <property type="match status" value="1"/>
</dbReference>
<dbReference type="Pfam" id="PF00431">
    <property type="entry name" value="CUB"/>
    <property type="match status" value="2"/>
</dbReference>
<dbReference type="Pfam" id="PF07645">
    <property type="entry name" value="EGF_CA"/>
    <property type="match status" value="1"/>
</dbReference>
<dbReference type="Pfam" id="PF00084">
    <property type="entry name" value="Sushi"/>
    <property type="match status" value="2"/>
</dbReference>
<dbReference type="Pfam" id="PF00089">
    <property type="entry name" value="Trypsin"/>
    <property type="match status" value="1"/>
</dbReference>
<dbReference type="PIRSF" id="PIRSF001155">
    <property type="entry name" value="C1r_C1s_MASP"/>
    <property type="match status" value="1"/>
</dbReference>
<dbReference type="PRINTS" id="PR00722">
    <property type="entry name" value="CHYMOTRYPSIN"/>
</dbReference>
<dbReference type="SMART" id="SM00032">
    <property type="entry name" value="CCP"/>
    <property type="match status" value="2"/>
</dbReference>
<dbReference type="SMART" id="SM00042">
    <property type="entry name" value="CUB"/>
    <property type="match status" value="2"/>
</dbReference>
<dbReference type="SMART" id="SM00181">
    <property type="entry name" value="EGF"/>
    <property type="match status" value="1"/>
</dbReference>
<dbReference type="SMART" id="SM00179">
    <property type="entry name" value="EGF_CA"/>
    <property type="match status" value="1"/>
</dbReference>
<dbReference type="SMART" id="SM00020">
    <property type="entry name" value="Tryp_SPc"/>
    <property type="match status" value="1"/>
</dbReference>
<dbReference type="SUPFAM" id="SSF57535">
    <property type="entry name" value="Complement control module/SCR domain"/>
    <property type="match status" value="2"/>
</dbReference>
<dbReference type="SUPFAM" id="SSF57196">
    <property type="entry name" value="EGF/Laminin"/>
    <property type="match status" value="1"/>
</dbReference>
<dbReference type="SUPFAM" id="SSF49854">
    <property type="entry name" value="Spermadhesin, CUB domain"/>
    <property type="match status" value="2"/>
</dbReference>
<dbReference type="SUPFAM" id="SSF50494">
    <property type="entry name" value="Trypsin-like serine proteases"/>
    <property type="match status" value="1"/>
</dbReference>
<dbReference type="PROSITE" id="PS00010">
    <property type="entry name" value="ASX_HYDROXYL"/>
    <property type="match status" value="1"/>
</dbReference>
<dbReference type="PROSITE" id="PS01180">
    <property type="entry name" value="CUB"/>
    <property type="match status" value="2"/>
</dbReference>
<dbReference type="PROSITE" id="PS01186">
    <property type="entry name" value="EGF_2"/>
    <property type="match status" value="1"/>
</dbReference>
<dbReference type="PROSITE" id="PS01187">
    <property type="entry name" value="EGF_CA"/>
    <property type="match status" value="1"/>
</dbReference>
<dbReference type="PROSITE" id="PS50923">
    <property type="entry name" value="SUSHI"/>
    <property type="match status" value="2"/>
</dbReference>
<dbReference type="PROSITE" id="PS50240">
    <property type="entry name" value="TRYPSIN_DOM"/>
    <property type="match status" value="1"/>
</dbReference>
<dbReference type="PROSITE" id="PS00135">
    <property type="entry name" value="TRYPSIN_SER"/>
    <property type="match status" value="1"/>
</dbReference>
<name>MASP2_MOUSE</name>
<evidence type="ECO:0000250" key="1"/>
<evidence type="ECO:0000255" key="2"/>
<evidence type="ECO:0000255" key="3">
    <source>
        <dbReference type="PROSITE-ProRule" id="PRU00059"/>
    </source>
</evidence>
<evidence type="ECO:0000255" key="4">
    <source>
        <dbReference type="PROSITE-ProRule" id="PRU00274"/>
    </source>
</evidence>
<evidence type="ECO:0000255" key="5">
    <source>
        <dbReference type="PROSITE-ProRule" id="PRU00302"/>
    </source>
</evidence>
<evidence type="ECO:0000269" key="6">
    <source>
    </source>
</evidence>
<evidence type="ECO:0000303" key="7">
    <source>
    </source>
</evidence>
<evidence type="ECO:0000305" key="8"/>
<reference key="1">
    <citation type="journal article" date="1998" name="J. Immunol.">
        <title>Two lineages of mannose-binding lectin-associated serine protease (MASP) in vertebrates.</title>
        <authorList>
            <person name="Endo Y."/>
            <person name="Takahashi M."/>
            <person name="Nakao M."/>
            <person name="Saiga H."/>
            <person name="Sekine H."/>
            <person name="Matsushita M."/>
            <person name="Nonaka M."/>
            <person name="Fujita T."/>
        </authorList>
    </citation>
    <scope>NUCLEOTIDE SEQUENCE [MRNA] (ISOFORM 1)</scope>
    <source>
        <strain>BALB/cJ</strain>
        <tissue>Liver</tissue>
    </source>
</reference>
<reference key="2">
    <citation type="journal article" date="1999" name="J. Immunol.">
        <title>The rat and mouse homologues of MASP-2 and MAp19, components of the mannan-binding lectin activation pathway of complement.</title>
        <authorList>
            <person name="Stover C.M."/>
            <person name="Thiel S."/>
            <person name="Lynch N.J."/>
            <person name="Schwaeble W.J."/>
        </authorList>
    </citation>
    <scope>NUCLEOTIDE SEQUENCE [MRNA] (ISOFORM 2)</scope>
    <scope>NUCLEOTIDE SEQUENCE [MRNA] OF 1-362 (ISOFORM 1)</scope>
    <source>
        <strain>C57BL/6J X CBA/J</strain>
    </source>
</reference>
<reference key="3">
    <citation type="journal article" date="2004" name="Mamm. Genome">
        <title>Organization of the MASP2 locus and its expression profile in mouse and rat.</title>
        <authorList>
            <person name="Stover C.M."/>
            <person name="Lynch N.J."/>
            <person name="Hanson S.J."/>
            <person name="Windbichler M."/>
            <person name="Gregory S.G."/>
            <person name="Schwaeble W.J."/>
        </authorList>
    </citation>
    <scope>NUCLEOTIDE SEQUENCE [GENOMIC DNA]</scope>
</reference>
<reference key="4">
    <citation type="journal article" date="2005" name="Science">
        <title>The transcriptional landscape of the mammalian genome.</title>
        <authorList>
            <person name="Carninci P."/>
            <person name="Kasukawa T."/>
            <person name="Katayama S."/>
            <person name="Gough J."/>
            <person name="Frith M.C."/>
            <person name="Maeda N."/>
            <person name="Oyama R."/>
            <person name="Ravasi T."/>
            <person name="Lenhard B."/>
            <person name="Wells C."/>
            <person name="Kodzius R."/>
            <person name="Shimokawa K."/>
            <person name="Bajic V.B."/>
            <person name="Brenner S.E."/>
            <person name="Batalov S."/>
            <person name="Forrest A.R."/>
            <person name="Zavolan M."/>
            <person name="Davis M.J."/>
            <person name="Wilming L.G."/>
            <person name="Aidinis V."/>
            <person name="Allen J.E."/>
            <person name="Ambesi-Impiombato A."/>
            <person name="Apweiler R."/>
            <person name="Aturaliya R.N."/>
            <person name="Bailey T.L."/>
            <person name="Bansal M."/>
            <person name="Baxter L."/>
            <person name="Beisel K.W."/>
            <person name="Bersano T."/>
            <person name="Bono H."/>
            <person name="Chalk A.M."/>
            <person name="Chiu K.P."/>
            <person name="Choudhary V."/>
            <person name="Christoffels A."/>
            <person name="Clutterbuck D.R."/>
            <person name="Crowe M.L."/>
            <person name="Dalla E."/>
            <person name="Dalrymple B.P."/>
            <person name="de Bono B."/>
            <person name="Della Gatta G."/>
            <person name="di Bernardo D."/>
            <person name="Down T."/>
            <person name="Engstrom P."/>
            <person name="Fagiolini M."/>
            <person name="Faulkner G."/>
            <person name="Fletcher C.F."/>
            <person name="Fukushima T."/>
            <person name="Furuno M."/>
            <person name="Futaki S."/>
            <person name="Gariboldi M."/>
            <person name="Georgii-Hemming P."/>
            <person name="Gingeras T.R."/>
            <person name="Gojobori T."/>
            <person name="Green R.E."/>
            <person name="Gustincich S."/>
            <person name="Harbers M."/>
            <person name="Hayashi Y."/>
            <person name="Hensch T.K."/>
            <person name="Hirokawa N."/>
            <person name="Hill D."/>
            <person name="Huminiecki L."/>
            <person name="Iacono M."/>
            <person name="Ikeo K."/>
            <person name="Iwama A."/>
            <person name="Ishikawa T."/>
            <person name="Jakt M."/>
            <person name="Kanapin A."/>
            <person name="Katoh M."/>
            <person name="Kawasawa Y."/>
            <person name="Kelso J."/>
            <person name="Kitamura H."/>
            <person name="Kitano H."/>
            <person name="Kollias G."/>
            <person name="Krishnan S.P."/>
            <person name="Kruger A."/>
            <person name="Kummerfeld S.K."/>
            <person name="Kurochkin I.V."/>
            <person name="Lareau L.F."/>
            <person name="Lazarevic D."/>
            <person name="Lipovich L."/>
            <person name="Liu J."/>
            <person name="Liuni S."/>
            <person name="McWilliam S."/>
            <person name="Madan Babu M."/>
            <person name="Madera M."/>
            <person name="Marchionni L."/>
            <person name="Matsuda H."/>
            <person name="Matsuzawa S."/>
            <person name="Miki H."/>
            <person name="Mignone F."/>
            <person name="Miyake S."/>
            <person name="Morris K."/>
            <person name="Mottagui-Tabar S."/>
            <person name="Mulder N."/>
            <person name="Nakano N."/>
            <person name="Nakauchi H."/>
            <person name="Ng P."/>
            <person name="Nilsson R."/>
            <person name="Nishiguchi S."/>
            <person name="Nishikawa S."/>
            <person name="Nori F."/>
            <person name="Ohara O."/>
            <person name="Okazaki Y."/>
            <person name="Orlando V."/>
            <person name="Pang K.C."/>
            <person name="Pavan W.J."/>
            <person name="Pavesi G."/>
            <person name="Pesole G."/>
            <person name="Petrovsky N."/>
            <person name="Piazza S."/>
            <person name="Reed J."/>
            <person name="Reid J.F."/>
            <person name="Ring B.Z."/>
            <person name="Ringwald M."/>
            <person name="Rost B."/>
            <person name="Ruan Y."/>
            <person name="Salzberg S.L."/>
            <person name="Sandelin A."/>
            <person name="Schneider C."/>
            <person name="Schoenbach C."/>
            <person name="Sekiguchi K."/>
            <person name="Semple C.A."/>
            <person name="Seno S."/>
            <person name="Sessa L."/>
            <person name="Sheng Y."/>
            <person name="Shibata Y."/>
            <person name="Shimada H."/>
            <person name="Shimada K."/>
            <person name="Silva D."/>
            <person name="Sinclair B."/>
            <person name="Sperling S."/>
            <person name="Stupka E."/>
            <person name="Sugiura K."/>
            <person name="Sultana R."/>
            <person name="Takenaka Y."/>
            <person name="Taki K."/>
            <person name="Tammoja K."/>
            <person name="Tan S.L."/>
            <person name="Tang S."/>
            <person name="Taylor M.S."/>
            <person name="Tegner J."/>
            <person name="Teichmann S.A."/>
            <person name="Ueda H.R."/>
            <person name="van Nimwegen E."/>
            <person name="Verardo R."/>
            <person name="Wei C.L."/>
            <person name="Yagi K."/>
            <person name="Yamanishi H."/>
            <person name="Zabarovsky E."/>
            <person name="Zhu S."/>
            <person name="Zimmer A."/>
            <person name="Hide W."/>
            <person name="Bult C."/>
            <person name="Grimmond S.M."/>
            <person name="Teasdale R.D."/>
            <person name="Liu E.T."/>
            <person name="Brusic V."/>
            <person name="Quackenbush J."/>
            <person name="Wahlestedt C."/>
            <person name="Mattick J.S."/>
            <person name="Hume D.A."/>
            <person name="Kai C."/>
            <person name="Sasaki D."/>
            <person name="Tomaru Y."/>
            <person name="Fukuda S."/>
            <person name="Kanamori-Katayama M."/>
            <person name="Suzuki M."/>
            <person name="Aoki J."/>
            <person name="Arakawa T."/>
            <person name="Iida J."/>
            <person name="Imamura K."/>
            <person name="Itoh M."/>
            <person name="Kato T."/>
            <person name="Kawaji H."/>
            <person name="Kawagashira N."/>
            <person name="Kawashima T."/>
            <person name="Kojima M."/>
            <person name="Kondo S."/>
            <person name="Konno H."/>
            <person name="Nakano K."/>
            <person name="Ninomiya N."/>
            <person name="Nishio T."/>
            <person name="Okada M."/>
            <person name="Plessy C."/>
            <person name="Shibata K."/>
            <person name="Shiraki T."/>
            <person name="Suzuki S."/>
            <person name="Tagami M."/>
            <person name="Waki K."/>
            <person name="Watahiki A."/>
            <person name="Okamura-Oho Y."/>
            <person name="Suzuki H."/>
            <person name="Kawai J."/>
            <person name="Hayashizaki Y."/>
        </authorList>
    </citation>
    <scope>NUCLEOTIDE SEQUENCE [LARGE SCALE MRNA] (ISOFORM 1)</scope>
    <source>
        <strain>C57BL/6J</strain>
        <tissue>Liver</tissue>
    </source>
</reference>
<reference key="5">
    <citation type="journal article" date="2009" name="PLoS Biol.">
        <title>Lineage-specific biology revealed by a finished genome assembly of the mouse.</title>
        <authorList>
            <person name="Church D.M."/>
            <person name="Goodstadt L."/>
            <person name="Hillier L.W."/>
            <person name="Zody M.C."/>
            <person name="Goldstein S."/>
            <person name="She X."/>
            <person name="Bult C.J."/>
            <person name="Agarwala R."/>
            <person name="Cherry J.L."/>
            <person name="DiCuccio M."/>
            <person name="Hlavina W."/>
            <person name="Kapustin Y."/>
            <person name="Meric P."/>
            <person name="Maglott D."/>
            <person name="Birtle Z."/>
            <person name="Marques A.C."/>
            <person name="Graves T."/>
            <person name="Zhou S."/>
            <person name="Teague B."/>
            <person name="Potamousis K."/>
            <person name="Churas C."/>
            <person name="Place M."/>
            <person name="Herschleb J."/>
            <person name="Runnheim R."/>
            <person name="Forrest D."/>
            <person name="Amos-Landgraf J."/>
            <person name="Schwartz D.C."/>
            <person name="Cheng Z."/>
            <person name="Lindblad-Toh K."/>
            <person name="Eichler E.E."/>
            <person name="Ponting C.P."/>
        </authorList>
    </citation>
    <scope>NUCLEOTIDE SEQUENCE [LARGE SCALE GENOMIC DNA]</scope>
    <source>
        <strain>C57BL/6J</strain>
    </source>
</reference>
<reference key="6">
    <citation type="journal article" date="2004" name="Genome Res.">
        <title>The status, quality, and expansion of the NIH full-length cDNA project: the Mammalian Gene Collection (MGC).</title>
        <authorList>
            <consortium name="The MGC Project Team"/>
        </authorList>
    </citation>
    <scope>NUCLEOTIDE SEQUENCE [LARGE SCALE MRNA] (ISOFORM 1)</scope>
    <source>
        <strain>FVB/N</strain>
        <tissue>Liver</tissue>
    </source>
</reference>
<reference key="7">
    <citation type="journal article" date="2006" name="J. Proteome Res.">
        <title>Proteome-wide characterization of N-glycosylation events by diagonal chromatography.</title>
        <authorList>
            <person name="Ghesquiere B."/>
            <person name="Van Damme J."/>
            <person name="Martens L."/>
            <person name="Vandekerckhove J."/>
            <person name="Gevaert K."/>
        </authorList>
    </citation>
    <scope>GLYCOSYLATION [LARGE SCALE ANALYSIS] AT ASN-641</scope>
    <source>
        <strain>C57BL/6J</strain>
        <tissue>Plasma</tissue>
    </source>
</reference>
<organism>
    <name type="scientific">Mus musculus</name>
    <name type="common">Mouse</name>
    <dbReference type="NCBI Taxonomy" id="10090"/>
    <lineage>
        <taxon>Eukaryota</taxon>
        <taxon>Metazoa</taxon>
        <taxon>Chordata</taxon>
        <taxon>Craniata</taxon>
        <taxon>Vertebrata</taxon>
        <taxon>Euteleostomi</taxon>
        <taxon>Mammalia</taxon>
        <taxon>Eutheria</taxon>
        <taxon>Euarchontoglires</taxon>
        <taxon>Glires</taxon>
        <taxon>Rodentia</taxon>
        <taxon>Myomorpha</taxon>
        <taxon>Muroidea</taxon>
        <taxon>Muridae</taxon>
        <taxon>Murinae</taxon>
        <taxon>Mus</taxon>
        <taxon>Mus</taxon>
    </lineage>
</organism>
<gene>
    <name type="primary">Masp2</name>
</gene>